<proteinExistence type="evidence at protein level"/>
<keyword id="KW-0002">3D-structure</keyword>
<keyword id="KW-0131">Cell cycle</keyword>
<keyword id="KW-0132">Cell division</keyword>
<keyword id="KW-0963">Cytoplasm</keyword>
<keyword id="KW-0238">DNA-binding</keyword>
<keyword id="KW-1185">Reference proteome</keyword>
<keyword id="KW-0717">Septation</keyword>
<feature type="chain" id="PRO_0000178701" description="Nucleoid occlusion protein">
    <location>
        <begin position="1"/>
        <end position="283"/>
    </location>
</feature>
<feature type="DNA-binding region" description="H-T-H motif" evidence="1">
    <location>
        <begin position="148"/>
        <end position="167"/>
    </location>
</feature>
<feature type="strand" evidence="5">
    <location>
        <begin position="31"/>
        <end position="34"/>
    </location>
</feature>
<feature type="helix" evidence="5">
    <location>
        <begin position="35"/>
        <end position="37"/>
    </location>
</feature>
<feature type="strand" evidence="5">
    <location>
        <begin position="42"/>
        <end position="44"/>
    </location>
</feature>
<feature type="helix" evidence="5">
    <location>
        <begin position="51"/>
        <end position="64"/>
    </location>
</feature>
<feature type="strand" evidence="5">
    <location>
        <begin position="70"/>
        <end position="74"/>
    </location>
</feature>
<feature type="strand" evidence="5">
    <location>
        <begin position="76"/>
        <end position="79"/>
    </location>
</feature>
<feature type="strand" evidence="5">
    <location>
        <begin position="81"/>
        <end position="85"/>
    </location>
</feature>
<feature type="helix" evidence="5">
    <location>
        <begin position="87"/>
        <end position="95"/>
    </location>
</feature>
<feature type="strand" evidence="5">
    <location>
        <begin position="99"/>
        <end position="105"/>
    </location>
</feature>
<feature type="helix" evidence="4">
    <location>
        <begin position="114"/>
        <end position="124"/>
    </location>
</feature>
<feature type="helix" evidence="4">
    <location>
        <begin position="129"/>
        <end position="142"/>
    </location>
</feature>
<feature type="helix" evidence="4">
    <location>
        <begin position="147"/>
        <end position="154"/>
    </location>
</feature>
<feature type="helix" evidence="4">
    <location>
        <begin position="158"/>
        <end position="165"/>
    </location>
</feature>
<feature type="helix" evidence="4">
    <location>
        <begin position="166"/>
        <end position="169"/>
    </location>
</feature>
<feature type="helix" evidence="4">
    <location>
        <begin position="172"/>
        <end position="179"/>
    </location>
</feature>
<feature type="helix" evidence="4">
    <location>
        <begin position="185"/>
        <end position="191"/>
    </location>
</feature>
<feature type="helix" evidence="5">
    <location>
        <begin position="192"/>
        <end position="194"/>
    </location>
</feature>
<feature type="helix" evidence="4">
    <location>
        <begin position="197"/>
        <end position="210"/>
    </location>
</feature>
<feature type="helix" evidence="4">
    <location>
        <begin position="214"/>
        <end position="228"/>
    </location>
</feature>
<reference key="1">
    <citation type="journal article" date="1992" name="Mol. Microbiol.">
        <title>Genes and their organization in the replication origin region of the bacterial chromosome.</title>
        <authorList>
            <person name="Ogasawara N."/>
            <person name="Yoshikawa H."/>
        </authorList>
    </citation>
    <scope>NUCLEOTIDE SEQUENCE [GENOMIC DNA]</scope>
    <source>
        <strain>168 / CRK2000</strain>
    </source>
</reference>
<reference key="2">
    <citation type="journal article" date="1994" name="DNA Res.">
        <title>Systematic sequencing of the 180 kilobase region of the Bacillus subtilis chromosome containing the replication origin.</title>
        <authorList>
            <person name="Ogasawara N."/>
            <person name="Nakai S."/>
            <person name="Yoshikawa H."/>
        </authorList>
    </citation>
    <scope>NUCLEOTIDE SEQUENCE [GENOMIC DNA]</scope>
    <source>
        <strain>168</strain>
    </source>
</reference>
<reference key="3">
    <citation type="journal article" date="1997" name="Nature">
        <title>The complete genome sequence of the Gram-positive bacterium Bacillus subtilis.</title>
        <authorList>
            <person name="Kunst F."/>
            <person name="Ogasawara N."/>
            <person name="Moszer I."/>
            <person name="Albertini A.M."/>
            <person name="Alloni G."/>
            <person name="Azevedo V."/>
            <person name="Bertero M.G."/>
            <person name="Bessieres P."/>
            <person name="Bolotin A."/>
            <person name="Borchert S."/>
            <person name="Borriss R."/>
            <person name="Boursier L."/>
            <person name="Brans A."/>
            <person name="Braun M."/>
            <person name="Brignell S.C."/>
            <person name="Bron S."/>
            <person name="Brouillet S."/>
            <person name="Bruschi C.V."/>
            <person name="Caldwell B."/>
            <person name="Capuano V."/>
            <person name="Carter N.M."/>
            <person name="Choi S.-K."/>
            <person name="Codani J.-J."/>
            <person name="Connerton I.F."/>
            <person name="Cummings N.J."/>
            <person name="Daniel R.A."/>
            <person name="Denizot F."/>
            <person name="Devine K.M."/>
            <person name="Duesterhoeft A."/>
            <person name="Ehrlich S.D."/>
            <person name="Emmerson P.T."/>
            <person name="Entian K.-D."/>
            <person name="Errington J."/>
            <person name="Fabret C."/>
            <person name="Ferrari E."/>
            <person name="Foulger D."/>
            <person name="Fritz C."/>
            <person name="Fujita M."/>
            <person name="Fujita Y."/>
            <person name="Fuma S."/>
            <person name="Galizzi A."/>
            <person name="Galleron N."/>
            <person name="Ghim S.-Y."/>
            <person name="Glaser P."/>
            <person name="Goffeau A."/>
            <person name="Golightly E.J."/>
            <person name="Grandi G."/>
            <person name="Guiseppi G."/>
            <person name="Guy B.J."/>
            <person name="Haga K."/>
            <person name="Haiech J."/>
            <person name="Harwood C.R."/>
            <person name="Henaut A."/>
            <person name="Hilbert H."/>
            <person name="Holsappel S."/>
            <person name="Hosono S."/>
            <person name="Hullo M.-F."/>
            <person name="Itaya M."/>
            <person name="Jones L.-M."/>
            <person name="Joris B."/>
            <person name="Karamata D."/>
            <person name="Kasahara Y."/>
            <person name="Klaerr-Blanchard M."/>
            <person name="Klein C."/>
            <person name="Kobayashi Y."/>
            <person name="Koetter P."/>
            <person name="Koningstein G."/>
            <person name="Krogh S."/>
            <person name="Kumano M."/>
            <person name="Kurita K."/>
            <person name="Lapidus A."/>
            <person name="Lardinois S."/>
            <person name="Lauber J."/>
            <person name="Lazarevic V."/>
            <person name="Lee S.-M."/>
            <person name="Levine A."/>
            <person name="Liu H."/>
            <person name="Masuda S."/>
            <person name="Mauel C."/>
            <person name="Medigue C."/>
            <person name="Medina N."/>
            <person name="Mellado R.P."/>
            <person name="Mizuno M."/>
            <person name="Moestl D."/>
            <person name="Nakai S."/>
            <person name="Noback M."/>
            <person name="Noone D."/>
            <person name="O'Reilly M."/>
            <person name="Ogawa K."/>
            <person name="Ogiwara A."/>
            <person name="Oudega B."/>
            <person name="Park S.-H."/>
            <person name="Parro V."/>
            <person name="Pohl T.M."/>
            <person name="Portetelle D."/>
            <person name="Porwollik S."/>
            <person name="Prescott A.M."/>
            <person name="Presecan E."/>
            <person name="Pujic P."/>
            <person name="Purnelle B."/>
            <person name="Rapoport G."/>
            <person name="Rey M."/>
            <person name="Reynolds S."/>
            <person name="Rieger M."/>
            <person name="Rivolta C."/>
            <person name="Rocha E."/>
            <person name="Roche B."/>
            <person name="Rose M."/>
            <person name="Sadaie Y."/>
            <person name="Sato T."/>
            <person name="Scanlan E."/>
            <person name="Schleich S."/>
            <person name="Schroeter R."/>
            <person name="Scoffone F."/>
            <person name="Sekiguchi J."/>
            <person name="Sekowska A."/>
            <person name="Seror S.J."/>
            <person name="Serror P."/>
            <person name="Shin B.-S."/>
            <person name="Soldo B."/>
            <person name="Sorokin A."/>
            <person name="Tacconi E."/>
            <person name="Takagi T."/>
            <person name="Takahashi H."/>
            <person name="Takemaru K."/>
            <person name="Takeuchi M."/>
            <person name="Tamakoshi A."/>
            <person name="Tanaka T."/>
            <person name="Terpstra P."/>
            <person name="Tognoni A."/>
            <person name="Tosato V."/>
            <person name="Uchiyama S."/>
            <person name="Vandenbol M."/>
            <person name="Vannier F."/>
            <person name="Vassarotti A."/>
            <person name="Viari A."/>
            <person name="Wambutt R."/>
            <person name="Wedler E."/>
            <person name="Wedler H."/>
            <person name="Weitzenegger T."/>
            <person name="Winters P."/>
            <person name="Wipat A."/>
            <person name="Yamamoto H."/>
            <person name="Yamane K."/>
            <person name="Yasumoto K."/>
            <person name="Yata K."/>
            <person name="Yoshida K."/>
            <person name="Yoshikawa H.-F."/>
            <person name="Zumstein E."/>
            <person name="Yoshikawa H."/>
            <person name="Danchin A."/>
        </authorList>
    </citation>
    <scope>NUCLEOTIDE SEQUENCE [LARGE SCALE GENOMIC DNA]</scope>
    <source>
        <strain>168</strain>
    </source>
</reference>
<reference key="4">
    <citation type="journal article" date="2002" name="J. Bacteriol.">
        <title>Characterization of the parB-like yyaA gene of Bacillus subtilis.</title>
        <authorList>
            <person name="Sievers J."/>
            <person name="Raether B."/>
            <person name="Perego M."/>
            <person name="Errington J."/>
        </authorList>
    </citation>
    <scope>CHARACTERIZATION</scope>
</reference>
<reference key="5">
    <citation type="journal article" date="2004" name="Cell">
        <title>Coordination of cell division and chromosome segregation by a nucleoid occlusion protein in Bacillus subtilis.</title>
        <authorList>
            <person name="Wu L.J."/>
            <person name="Errington J."/>
        </authorList>
    </citation>
    <scope>FUNCTION AS A COORDINATOR OF CELL DIVISION AND CHROMOSOME SEGREGATION</scope>
    <scope>SUBCELLULAR LOCATION</scope>
    <scope>INDUCTION</scope>
</reference>
<dbReference type="EMBL" id="X62539">
    <property type="protein sequence ID" value="CAA44406.1"/>
    <property type="molecule type" value="Genomic_DNA"/>
</dbReference>
<dbReference type="EMBL" id="D26185">
    <property type="protein sequence ID" value="BAA05229.1"/>
    <property type="molecule type" value="Genomic_DNA"/>
</dbReference>
<dbReference type="EMBL" id="AL009126">
    <property type="protein sequence ID" value="CAB16136.1"/>
    <property type="molecule type" value="Genomic_DNA"/>
</dbReference>
<dbReference type="PIR" id="I40442">
    <property type="entry name" value="I40442"/>
</dbReference>
<dbReference type="RefSeq" id="WP_003226829.1">
    <property type="nucleotide sequence ID" value="NZ_OZ025638.1"/>
</dbReference>
<dbReference type="PDB" id="6Y93">
    <property type="method" value="X-ray"/>
    <property type="resolution" value="2.23 A"/>
    <property type="chains" value="A/B=111-242"/>
</dbReference>
<dbReference type="PDB" id="7OL9">
    <property type="method" value="X-ray"/>
    <property type="resolution" value="2.90 A"/>
    <property type="chains" value="A/B=1-242"/>
</dbReference>
<dbReference type="PDBsum" id="6Y93"/>
<dbReference type="PDBsum" id="7OL9"/>
<dbReference type="SMR" id="P37524"/>
<dbReference type="FunCoup" id="P37524">
    <property type="interactions" value="5"/>
</dbReference>
<dbReference type="STRING" id="224308.BSU40990"/>
<dbReference type="jPOST" id="P37524"/>
<dbReference type="PaxDb" id="224308-BSU40990"/>
<dbReference type="EnsemblBacteria" id="CAB16136">
    <property type="protein sequence ID" value="CAB16136"/>
    <property type="gene ID" value="BSU_40990"/>
</dbReference>
<dbReference type="GeneID" id="937920"/>
<dbReference type="KEGG" id="bsu:BSU40990"/>
<dbReference type="PATRIC" id="fig|224308.179.peg.4441"/>
<dbReference type="eggNOG" id="COG1475">
    <property type="taxonomic scope" value="Bacteria"/>
</dbReference>
<dbReference type="InParanoid" id="P37524"/>
<dbReference type="OrthoDB" id="9802051at2"/>
<dbReference type="PhylomeDB" id="P37524"/>
<dbReference type="BioCyc" id="BSUB:BSU40990-MONOMER"/>
<dbReference type="Proteomes" id="UP000001570">
    <property type="component" value="Chromosome"/>
</dbReference>
<dbReference type="GO" id="GO:0005694">
    <property type="term" value="C:chromosome"/>
    <property type="evidence" value="ECO:0000318"/>
    <property type="project" value="GO_Central"/>
</dbReference>
<dbReference type="GO" id="GO:0005737">
    <property type="term" value="C:cytoplasm"/>
    <property type="evidence" value="ECO:0007669"/>
    <property type="project" value="UniProtKB-UniRule"/>
</dbReference>
<dbReference type="GO" id="GO:0009295">
    <property type="term" value="C:nucleoid"/>
    <property type="evidence" value="ECO:0007669"/>
    <property type="project" value="UniProtKB-SubCell"/>
</dbReference>
<dbReference type="GO" id="GO:0003677">
    <property type="term" value="F:DNA binding"/>
    <property type="evidence" value="ECO:0007669"/>
    <property type="project" value="UniProtKB-UniRule"/>
</dbReference>
<dbReference type="GO" id="GO:0007059">
    <property type="term" value="P:chromosome segregation"/>
    <property type="evidence" value="ECO:0000318"/>
    <property type="project" value="GO_Central"/>
</dbReference>
<dbReference type="GO" id="GO:0000917">
    <property type="term" value="P:division septum assembly"/>
    <property type="evidence" value="ECO:0007669"/>
    <property type="project" value="UniProtKB-KW"/>
</dbReference>
<dbReference type="GO" id="GO:0045881">
    <property type="term" value="P:positive regulation of sporulation resulting in formation of a cellular spore"/>
    <property type="evidence" value="ECO:0000318"/>
    <property type="project" value="GO_Central"/>
</dbReference>
<dbReference type="CDD" id="cd16393">
    <property type="entry name" value="SPO0J_N"/>
    <property type="match status" value="1"/>
</dbReference>
<dbReference type="FunFam" id="1.10.10.2830:FF:000001">
    <property type="entry name" value="Chromosome partitioning protein ParB"/>
    <property type="match status" value="1"/>
</dbReference>
<dbReference type="FunFam" id="3.90.1530.30:FF:000001">
    <property type="entry name" value="Chromosome partitioning protein ParB"/>
    <property type="match status" value="1"/>
</dbReference>
<dbReference type="Gene3D" id="1.10.10.2830">
    <property type="match status" value="1"/>
</dbReference>
<dbReference type="Gene3D" id="3.90.1530.30">
    <property type="match status" value="1"/>
</dbReference>
<dbReference type="HAMAP" id="MF_02015">
    <property type="entry name" value="ParB_Noc"/>
    <property type="match status" value="1"/>
</dbReference>
<dbReference type="InterPro" id="IPR050336">
    <property type="entry name" value="Chromosome_partition/occlusion"/>
</dbReference>
<dbReference type="InterPro" id="IPR041468">
    <property type="entry name" value="HTH_ParB/Spo0J"/>
</dbReference>
<dbReference type="InterPro" id="IPR023705">
    <property type="entry name" value="Nucleoid_occlusion_protein"/>
</dbReference>
<dbReference type="InterPro" id="IPR004437">
    <property type="entry name" value="ParB/RepB/Spo0J"/>
</dbReference>
<dbReference type="InterPro" id="IPR003115">
    <property type="entry name" value="ParB/Sulfiredoxin_dom"/>
</dbReference>
<dbReference type="InterPro" id="IPR036086">
    <property type="entry name" value="ParB/Sulfiredoxin_sf"/>
</dbReference>
<dbReference type="NCBIfam" id="TIGR04285">
    <property type="entry name" value="nucleoid_noc"/>
    <property type="match status" value="1"/>
</dbReference>
<dbReference type="NCBIfam" id="TIGR00180">
    <property type="entry name" value="parB_part"/>
    <property type="match status" value="1"/>
</dbReference>
<dbReference type="PANTHER" id="PTHR33375">
    <property type="entry name" value="CHROMOSOME-PARTITIONING PROTEIN PARB-RELATED"/>
    <property type="match status" value="1"/>
</dbReference>
<dbReference type="PANTHER" id="PTHR33375:SF8">
    <property type="entry name" value="NUCLEOID OCCLUSION PROTEIN"/>
    <property type="match status" value="1"/>
</dbReference>
<dbReference type="Pfam" id="PF17762">
    <property type="entry name" value="HTH_ParB"/>
    <property type="match status" value="1"/>
</dbReference>
<dbReference type="Pfam" id="PF02195">
    <property type="entry name" value="ParBc"/>
    <property type="match status" value="1"/>
</dbReference>
<dbReference type="SMART" id="SM00470">
    <property type="entry name" value="ParB"/>
    <property type="match status" value="1"/>
</dbReference>
<dbReference type="SUPFAM" id="SSF109709">
    <property type="entry name" value="KorB DNA-binding domain-like"/>
    <property type="match status" value="1"/>
</dbReference>
<dbReference type="SUPFAM" id="SSF110849">
    <property type="entry name" value="ParB/Sulfiredoxin"/>
    <property type="match status" value="1"/>
</dbReference>
<evidence type="ECO:0000255" key="1"/>
<evidence type="ECO:0000269" key="2">
    <source>
    </source>
</evidence>
<evidence type="ECO:0000305" key="3"/>
<evidence type="ECO:0007829" key="4">
    <source>
        <dbReference type="PDB" id="6Y93"/>
    </source>
</evidence>
<evidence type="ECO:0007829" key="5">
    <source>
        <dbReference type="PDB" id="7OL9"/>
    </source>
</evidence>
<sequence length="283" mass="32795">MKHSFSRFFGLGEKEQEPEIAEHDTNKEEILEIPVNAIVPNRFQPRTIFSDEKIKELAMTIHTHGIIQPIVVRHTEEEGQYELIAGERRWRAVQSLEWEKIPAIIKDFSDTETASVALIENLQREELSSIEEAHAYARLLELHDLTQEALAQRLGKGQSTIANKLRLLKLPQPVQEAIMEKKITERHARALIPLKQPELQVTLLTEIIEKSLNVKQTEDRVVKMLEQGQRKPKPRRKAFSRDTRIAMNTIRQSLSMVEDSGVKLNTEEEEFEEYIQLTIRIPK</sequence>
<accession>P37524</accession>
<gene>
    <name type="primary">noc</name>
    <name type="synonym">yyaA</name>
    <name type="ordered locus">BSU40990</name>
</gene>
<name>NOC_BACSU</name>
<organism>
    <name type="scientific">Bacillus subtilis (strain 168)</name>
    <dbReference type="NCBI Taxonomy" id="224308"/>
    <lineage>
        <taxon>Bacteria</taxon>
        <taxon>Bacillati</taxon>
        <taxon>Bacillota</taxon>
        <taxon>Bacilli</taxon>
        <taxon>Bacillales</taxon>
        <taxon>Bacillaceae</taxon>
        <taxon>Bacillus</taxon>
    </lineage>
</organism>
<protein>
    <recommendedName>
        <fullName>Nucleoid occlusion protein</fullName>
        <shortName>Noc</shortName>
    </recommendedName>
</protein>
<comment type="function">
    <text evidence="2">Effects nucleoid occlusion by binding relatively nonspecifically to DNA and preventing the assembly of the division machinery in the vicinity of the nucleoid, especially under conditions that disturb the cell cycle. It helps to coordinate cell division and chromosome segregation by preventing the formation of the Z ring through the nucleoid, which would cause chromosome breakage.</text>
</comment>
<comment type="subcellular location">
    <subcellularLocation>
        <location evidence="2">Cytoplasm</location>
        <location evidence="2">Nucleoid</location>
    </subcellularLocation>
</comment>
<comment type="induction">
    <text evidence="2">Expressed constitutively.</text>
</comment>
<comment type="similarity">
    <text evidence="3">Belongs to the ParB family.</text>
</comment>